<gene>
    <name type="primary">pho2</name>
    <name type="ORF">SPBC15D4.15</name>
</gene>
<name>PNPP_SCHPO</name>
<accession>Q00472</accession>
<accession>O74320</accession>
<evidence type="ECO:0000305" key="1"/>
<keyword id="KW-0378">Hydrolase</keyword>
<keyword id="KW-1185">Reference proteome</keyword>
<comment type="catalytic activity">
    <reaction>
        <text>4-nitrophenyl phosphate + H2O = 4-nitrophenol + phosphate + H(+)</text>
        <dbReference type="Rhea" id="RHEA:21664"/>
        <dbReference type="ChEBI" id="CHEBI:15377"/>
        <dbReference type="ChEBI" id="CHEBI:15378"/>
        <dbReference type="ChEBI" id="CHEBI:43474"/>
        <dbReference type="ChEBI" id="CHEBI:57917"/>
        <dbReference type="ChEBI" id="CHEBI:61146"/>
        <dbReference type="EC" id="3.1.3.41"/>
    </reaction>
</comment>
<comment type="activity regulation">
    <text>Activity enhanced by Mg(2+) ion but inhibited by Zn(2+) ion.</text>
</comment>
<comment type="subunit">
    <text>Homodimer.</text>
</comment>
<comment type="PTM">
    <text>The N-terminus is blocked.</text>
</comment>
<sequence length="298" mass="32794">MAKKLSSPKEYKEFIDKFDVFLFDCDGVLWSGSKPIPGVTDTMKLLRSLGKQIIFVSNNSTKSRETYMNKINEHGIAAKLEEIYPSAYSSATYVKKVLKLPADKKVFVLGEAGIEDELDRVGVAHIGGTDPSLRRALASEDVEKIGPDPSVGAVLCGMDMHVTYLKYCMAFQYLQDPNCAFLLTNQDSTFPTNGKFLPGSGAISYPLIFSTGRQPKILGKPYDEMMEAIIANVNFDRKKACFVGDRLNTDIQFAKNSNLGGSLLVLTGVSKEEEILEKDAPVVPDYYVESLAKLAETA</sequence>
<proteinExistence type="predicted"/>
<protein>
    <recommendedName>
        <fullName>4-nitrophenylphosphatase</fullName>
        <shortName>PNPPase</shortName>
        <ecNumber>3.1.3.41</ecNumber>
    </recommendedName>
</protein>
<feature type="chain" id="PRO_0000058480" description="4-nitrophenylphosphatase">
    <location>
        <begin position="1"/>
        <end position="298"/>
    </location>
</feature>
<feature type="sequence conflict" description="In Ref. 1." evidence="1" ref="1">
    <original>MAKKLSSPKEYKEFIDKFDVFLFDCDGVLWSGSKPIPGVTDTMKLLRSL</original>
    <variation>MKLLRSLGKSLLFFRVNSFT</variation>
    <location>
        <begin position="1"/>
        <end position="49"/>
    </location>
</feature>
<feature type="sequence conflict" description="In Ref. 1; CAA44597." evidence="1" ref="1">
    <original>L</original>
    <variation>V</variation>
    <location>
        <position position="98"/>
    </location>
</feature>
<dbReference type="EC" id="3.1.3.41"/>
<dbReference type="EMBL" id="X62722">
    <property type="protein sequence ID" value="CAA44597.1"/>
    <property type="molecule type" value="Genomic_DNA"/>
</dbReference>
<dbReference type="EMBL" id="CU329671">
    <property type="protein sequence ID" value="CAA20490.1"/>
    <property type="molecule type" value="Genomic_DNA"/>
</dbReference>
<dbReference type="PIR" id="S16088">
    <property type="entry name" value="S16088"/>
</dbReference>
<dbReference type="PIR" id="T39491">
    <property type="entry name" value="T39491"/>
</dbReference>
<dbReference type="RefSeq" id="NP_596255.1">
    <property type="nucleotide sequence ID" value="NM_001022174.2"/>
</dbReference>
<dbReference type="SMR" id="Q00472"/>
<dbReference type="BioGRID" id="276504">
    <property type="interactions" value="50"/>
</dbReference>
<dbReference type="FunCoup" id="Q00472">
    <property type="interactions" value="31"/>
</dbReference>
<dbReference type="STRING" id="284812.Q00472"/>
<dbReference type="iPTMnet" id="Q00472"/>
<dbReference type="PaxDb" id="4896-SPBC15D4.15.1"/>
<dbReference type="EnsemblFungi" id="SPBC15D4.15.1">
    <property type="protein sequence ID" value="SPBC15D4.15.1:pep"/>
    <property type="gene ID" value="SPBC15D4.15"/>
</dbReference>
<dbReference type="GeneID" id="2539960"/>
<dbReference type="KEGG" id="spo:2539960"/>
<dbReference type="PomBase" id="SPBC15D4.15">
    <property type="gene designation" value="pho2"/>
</dbReference>
<dbReference type="VEuPathDB" id="FungiDB:SPBC15D4.15"/>
<dbReference type="eggNOG" id="KOG2882">
    <property type="taxonomic scope" value="Eukaryota"/>
</dbReference>
<dbReference type="HOGENOM" id="CLU_043473_0_0_1"/>
<dbReference type="InParanoid" id="Q00472"/>
<dbReference type="OMA" id="PPMHRET"/>
<dbReference type="PhylomeDB" id="Q00472"/>
<dbReference type="PRO" id="PR:Q00472"/>
<dbReference type="Proteomes" id="UP000002485">
    <property type="component" value="Chromosome II"/>
</dbReference>
<dbReference type="GO" id="GO:0005737">
    <property type="term" value="C:cytoplasm"/>
    <property type="evidence" value="ECO:0000318"/>
    <property type="project" value="GO_Central"/>
</dbReference>
<dbReference type="GO" id="GO:0005829">
    <property type="term" value="C:cytosol"/>
    <property type="evidence" value="ECO:0007005"/>
    <property type="project" value="PomBase"/>
</dbReference>
<dbReference type="GO" id="GO:0005634">
    <property type="term" value="C:nucleus"/>
    <property type="evidence" value="ECO:0007005"/>
    <property type="project" value="PomBase"/>
</dbReference>
<dbReference type="GO" id="GO:0004035">
    <property type="term" value="F:alkaline phosphatase activity"/>
    <property type="evidence" value="ECO:0000314"/>
    <property type="project" value="PomBase"/>
</dbReference>
<dbReference type="GO" id="GO:0016791">
    <property type="term" value="F:phosphatase activity"/>
    <property type="evidence" value="ECO:0000314"/>
    <property type="project" value="PomBase"/>
</dbReference>
<dbReference type="GO" id="GO:0008967">
    <property type="term" value="F:phosphoglycolate phosphatase activity"/>
    <property type="evidence" value="ECO:0000318"/>
    <property type="project" value="GO_Central"/>
</dbReference>
<dbReference type="GO" id="GO:1990748">
    <property type="term" value="P:cellular detoxification"/>
    <property type="evidence" value="ECO:0000303"/>
    <property type="project" value="PomBase"/>
</dbReference>
<dbReference type="CDD" id="cd07510">
    <property type="entry name" value="HAD_Pase_UmpH-like"/>
    <property type="match status" value="1"/>
</dbReference>
<dbReference type="FunFam" id="3.40.50.1000:FF:000039">
    <property type="entry name" value="Phosphoglycolate phosphatase"/>
    <property type="match status" value="1"/>
</dbReference>
<dbReference type="Gene3D" id="3.40.50.1000">
    <property type="entry name" value="HAD superfamily/HAD-like"/>
    <property type="match status" value="2"/>
</dbReference>
<dbReference type="InterPro" id="IPR036412">
    <property type="entry name" value="HAD-like_sf"/>
</dbReference>
<dbReference type="InterPro" id="IPR006357">
    <property type="entry name" value="HAD-SF_hydro_IIA"/>
</dbReference>
<dbReference type="InterPro" id="IPR023214">
    <property type="entry name" value="HAD_sf"/>
</dbReference>
<dbReference type="InterPro" id="IPR006349">
    <property type="entry name" value="PGP_euk"/>
</dbReference>
<dbReference type="NCBIfam" id="TIGR01460">
    <property type="entry name" value="HAD-SF-IIA"/>
    <property type="match status" value="1"/>
</dbReference>
<dbReference type="NCBIfam" id="TIGR01452">
    <property type="entry name" value="PGP_euk"/>
    <property type="match status" value="1"/>
</dbReference>
<dbReference type="PANTHER" id="PTHR19288">
    <property type="entry name" value="4-NITROPHENYLPHOSPHATASE-RELATED"/>
    <property type="match status" value="1"/>
</dbReference>
<dbReference type="PANTHER" id="PTHR19288:SF46">
    <property type="entry name" value="HALOACID DEHALOGENASE-LIKE HYDROLASE DOMAIN-CONTAINING PROTEIN 2"/>
    <property type="match status" value="1"/>
</dbReference>
<dbReference type="Pfam" id="PF13344">
    <property type="entry name" value="Hydrolase_6"/>
    <property type="match status" value="1"/>
</dbReference>
<dbReference type="Pfam" id="PF13242">
    <property type="entry name" value="Hydrolase_like"/>
    <property type="match status" value="1"/>
</dbReference>
<dbReference type="PIRSF" id="PIRSF000915">
    <property type="entry name" value="PGP-type_phosphatase"/>
    <property type="match status" value="1"/>
</dbReference>
<dbReference type="SFLD" id="SFLDG01139">
    <property type="entry name" value="C2.A:_Pyridoxal_Phosphate_Phos"/>
    <property type="match status" value="1"/>
</dbReference>
<dbReference type="SFLD" id="SFLDF00039">
    <property type="entry name" value="phosphoglycolate_phosphatase_2"/>
    <property type="match status" value="1"/>
</dbReference>
<dbReference type="SUPFAM" id="SSF56784">
    <property type="entry name" value="HAD-like"/>
    <property type="match status" value="1"/>
</dbReference>
<organism>
    <name type="scientific">Schizosaccharomyces pombe (strain 972 / ATCC 24843)</name>
    <name type="common">Fission yeast</name>
    <dbReference type="NCBI Taxonomy" id="284812"/>
    <lineage>
        <taxon>Eukaryota</taxon>
        <taxon>Fungi</taxon>
        <taxon>Dikarya</taxon>
        <taxon>Ascomycota</taxon>
        <taxon>Taphrinomycotina</taxon>
        <taxon>Schizosaccharomycetes</taxon>
        <taxon>Schizosaccharomycetales</taxon>
        <taxon>Schizosaccharomycetaceae</taxon>
        <taxon>Schizosaccharomyces</taxon>
    </lineage>
</organism>
<reference key="1">
    <citation type="journal article" date="1991" name="Eur. J. Biochem.">
        <title>Characterisation of the specific p-nitrophenylphosphatase gene and protein of Schizosaccharomyces pombe.</title>
        <authorList>
            <person name="Yang J."/>
            <person name="Dhamija S.S."/>
            <person name="Schweingruber M.E."/>
        </authorList>
    </citation>
    <scope>NUCLEOTIDE SEQUENCE [GENOMIC DNA]</scope>
    <source>
        <strain>BD31</strain>
    </source>
</reference>
<reference key="2">
    <citation type="journal article" date="2002" name="Nature">
        <title>The genome sequence of Schizosaccharomyces pombe.</title>
        <authorList>
            <person name="Wood V."/>
            <person name="Gwilliam R."/>
            <person name="Rajandream M.A."/>
            <person name="Lyne M.H."/>
            <person name="Lyne R."/>
            <person name="Stewart A."/>
            <person name="Sgouros J.G."/>
            <person name="Peat N."/>
            <person name="Hayles J."/>
            <person name="Baker S.G."/>
            <person name="Basham D."/>
            <person name="Bowman S."/>
            <person name="Brooks K."/>
            <person name="Brown D."/>
            <person name="Brown S."/>
            <person name="Chillingworth T."/>
            <person name="Churcher C.M."/>
            <person name="Collins M."/>
            <person name="Connor R."/>
            <person name="Cronin A."/>
            <person name="Davis P."/>
            <person name="Feltwell T."/>
            <person name="Fraser A."/>
            <person name="Gentles S."/>
            <person name="Goble A."/>
            <person name="Hamlin N."/>
            <person name="Harris D.E."/>
            <person name="Hidalgo J."/>
            <person name="Hodgson G."/>
            <person name="Holroyd S."/>
            <person name="Hornsby T."/>
            <person name="Howarth S."/>
            <person name="Huckle E.J."/>
            <person name="Hunt S."/>
            <person name="Jagels K."/>
            <person name="James K.D."/>
            <person name="Jones L."/>
            <person name="Jones M."/>
            <person name="Leather S."/>
            <person name="McDonald S."/>
            <person name="McLean J."/>
            <person name="Mooney P."/>
            <person name="Moule S."/>
            <person name="Mungall K.L."/>
            <person name="Murphy L.D."/>
            <person name="Niblett D."/>
            <person name="Odell C."/>
            <person name="Oliver K."/>
            <person name="O'Neil S."/>
            <person name="Pearson D."/>
            <person name="Quail M.A."/>
            <person name="Rabbinowitsch E."/>
            <person name="Rutherford K.M."/>
            <person name="Rutter S."/>
            <person name="Saunders D."/>
            <person name="Seeger K."/>
            <person name="Sharp S."/>
            <person name="Skelton J."/>
            <person name="Simmonds M.N."/>
            <person name="Squares R."/>
            <person name="Squares S."/>
            <person name="Stevens K."/>
            <person name="Taylor K."/>
            <person name="Taylor R.G."/>
            <person name="Tivey A."/>
            <person name="Walsh S.V."/>
            <person name="Warren T."/>
            <person name="Whitehead S."/>
            <person name="Woodward J.R."/>
            <person name="Volckaert G."/>
            <person name="Aert R."/>
            <person name="Robben J."/>
            <person name="Grymonprez B."/>
            <person name="Weltjens I."/>
            <person name="Vanstreels E."/>
            <person name="Rieger M."/>
            <person name="Schaefer M."/>
            <person name="Mueller-Auer S."/>
            <person name="Gabel C."/>
            <person name="Fuchs M."/>
            <person name="Duesterhoeft A."/>
            <person name="Fritzc C."/>
            <person name="Holzer E."/>
            <person name="Moestl D."/>
            <person name="Hilbert H."/>
            <person name="Borzym K."/>
            <person name="Langer I."/>
            <person name="Beck A."/>
            <person name="Lehrach H."/>
            <person name="Reinhardt R."/>
            <person name="Pohl T.M."/>
            <person name="Eger P."/>
            <person name="Zimmermann W."/>
            <person name="Wedler H."/>
            <person name="Wambutt R."/>
            <person name="Purnelle B."/>
            <person name="Goffeau A."/>
            <person name="Cadieu E."/>
            <person name="Dreano S."/>
            <person name="Gloux S."/>
            <person name="Lelaure V."/>
            <person name="Mottier S."/>
            <person name="Galibert F."/>
            <person name="Aves S.J."/>
            <person name="Xiang Z."/>
            <person name="Hunt C."/>
            <person name="Moore K."/>
            <person name="Hurst S.M."/>
            <person name="Lucas M."/>
            <person name="Rochet M."/>
            <person name="Gaillardin C."/>
            <person name="Tallada V.A."/>
            <person name="Garzon A."/>
            <person name="Thode G."/>
            <person name="Daga R.R."/>
            <person name="Cruzado L."/>
            <person name="Jimenez J."/>
            <person name="Sanchez M."/>
            <person name="del Rey F."/>
            <person name="Benito J."/>
            <person name="Dominguez A."/>
            <person name="Revuelta J.L."/>
            <person name="Moreno S."/>
            <person name="Armstrong J."/>
            <person name="Forsburg S.L."/>
            <person name="Cerutti L."/>
            <person name="Lowe T."/>
            <person name="McCombie W.R."/>
            <person name="Paulsen I."/>
            <person name="Potashkin J."/>
            <person name="Shpakovski G.V."/>
            <person name="Ussery D."/>
            <person name="Barrell B.G."/>
            <person name="Nurse P."/>
        </authorList>
    </citation>
    <scope>NUCLEOTIDE SEQUENCE [LARGE SCALE GENOMIC DNA]</scope>
    <source>
        <strain>972 / ATCC 24843</strain>
    </source>
</reference>